<protein>
    <recommendedName>
        <fullName evidence="1">NH(3)-dependent NAD(+) synthetase</fullName>
        <ecNumber evidence="1">6.3.1.5</ecNumber>
    </recommendedName>
</protein>
<sequence>MNPEAVVNYLMEWSRQKVKEAGALGIVLGVSGGVDSAVAAIIAKKAFPENCMTLLLPCESDVVDRMDSQALVEKFNIPYRIIDLDNAYHLLSTQFESYLKCEGLKGKLLRGNIKSRLRMMALYYSAQARNYLVLGTSNKSELCVGYSTKYGDAGVDLQLLGDLLKREVYELAQFLGVPETIVNKPPSGGLWSGQTDEGEMGLTYEELDNYLASGDGSPEVINKIEGMMAGSQHKRKMPPVAMIPPELRN</sequence>
<evidence type="ECO:0000255" key="1">
    <source>
        <dbReference type="HAMAP-Rule" id="MF_00193"/>
    </source>
</evidence>
<proteinExistence type="inferred from homology"/>
<name>NADE_SYNWW</name>
<accession>Q0AX10</accession>
<dbReference type="EC" id="6.3.1.5" evidence="1"/>
<dbReference type="EMBL" id="CP000448">
    <property type="protein sequence ID" value="ABI68744.1"/>
    <property type="molecule type" value="Genomic_DNA"/>
</dbReference>
<dbReference type="RefSeq" id="WP_011640843.1">
    <property type="nucleotide sequence ID" value="NC_008346.1"/>
</dbReference>
<dbReference type="SMR" id="Q0AX10"/>
<dbReference type="STRING" id="335541.Swol_1437"/>
<dbReference type="KEGG" id="swo:Swol_1437"/>
<dbReference type="eggNOG" id="COG0171">
    <property type="taxonomic scope" value="Bacteria"/>
</dbReference>
<dbReference type="HOGENOM" id="CLU_059327_1_1_9"/>
<dbReference type="OrthoDB" id="9803818at2"/>
<dbReference type="UniPathway" id="UPA00253">
    <property type="reaction ID" value="UER00333"/>
</dbReference>
<dbReference type="Proteomes" id="UP000001968">
    <property type="component" value="Chromosome"/>
</dbReference>
<dbReference type="GO" id="GO:0005737">
    <property type="term" value="C:cytoplasm"/>
    <property type="evidence" value="ECO:0007669"/>
    <property type="project" value="InterPro"/>
</dbReference>
<dbReference type="GO" id="GO:0005524">
    <property type="term" value="F:ATP binding"/>
    <property type="evidence" value="ECO:0007669"/>
    <property type="project" value="UniProtKB-UniRule"/>
</dbReference>
<dbReference type="GO" id="GO:0004359">
    <property type="term" value="F:glutaminase activity"/>
    <property type="evidence" value="ECO:0007669"/>
    <property type="project" value="InterPro"/>
</dbReference>
<dbReference type="GO" id="GO:0046872">
    <property type="term" value="F:metal ion binding"/>
    <property type="evidence" value="ECO:0007669"/>
    <property type="project" value="UniProtKB-KW"/>
</dbReference>
<dbReference type="GO" id="GO:0003952">
    <property type="term" value="F:NAD+ synthase (glutamine-hydrolyzing) activity"/>
    <property type="evidence" value="ECO:0007669"/>
    <property type="project" value="InterPro"/>
</dbReference>
<dbReference type="GO" id="GO:0008795">
    <property type="term" value="F:NAD+ synthase activity"/>
    <property type="evidence" value="ECO:0007669"/>
    <property type="project" value="UniProtKB-UniRule"/>
</dbReference>
<dbReference type="GO" id="GO:0009435">
    <property type="term" value="P:NAD biosynthetic process"/>
    <property type="evidence" value="ECO:0007669"/>
    <property type="project" value="UniProtKB-UniRule"/>
</dbReference>
<dbReference type="CDD" id="cd00553">
    <property type="entry name" value="NAD_synthase"/>
    <property type="match status" value="1"/>
</dbReference>
<dbReference type="Gene3D" id="3.40.50.620">
    <property type="entry name" value="HUPs"/>
    <property type="match status" value="1"/>
</dbReference>
<dbReference type="HAMAP" id="MF_00193">
    <property type="entry name" value="NadE_ammonia_dep"/>
    <property type="match status" value="1"/>
</dbReference>
<dbReference type="InterPro" id="IPR022310">
    <property type="entry name" value="NAD/GMP_synthase"/>
</dbReference>
<dbReference type="InterPro" id="IPR003694">
    <property type="entry name" value="NAD_synthase"/>
</dbReference>
<dbReference type="InterPro" id="IPR022926">
    <property type="entry name" value="NH(3)-dep_NAD(+)_synth"/>
</dbReference>
<dbReference type="InterPro" id="IPR014729">
    <property type="entry name" value="Rossmann-like_a/b/a_fold"/>
</dbReference>
<dbReference type="NCBIfam" id="TIGR00552">
    <property type="entry name" value="nadE"/>
    <property type="match status" value="1"/>
</dbReference>
<dbReference type="PANTHER" id="PTHR23090:SF9">
    <property type="entry name" value="GLUTAMINE-DEPENDENT NAD(+) SYNTHETASE"/>
    <property type="match status" value="1"/>
</dbReference>
<dbReference type="PANTHER" id="PTHR23090">
    <property type="entry name" value="NH 3 /GLUTAMINE-DEPENDENT NAD + SYNTHETASE"/>
    <property type="match status" value="1"/>
</dbReference>
<dbReference type="Pfam" id="PF02540">
    <property type="entry name" value="NAD_synthase"/>
    <property type="match status" value="1"/>
</dbReference>
<dbReference type="SUPFAM" id="SSF52402">
    <property type="entry name" value="Adenine nucleotide alpha hydrolases-like"/>
    <property type="match status" value="1"/>
</dbReference>
<reference key="1">
    <citation type="journal article" date="2010" name="Environ. Microbiol.">
        <title>The genome of Syntrophomonas wolfei: new insights into syntrophic metabolism and biohydrogen production.</title>
        <authorList>
            <person name="Sieber J.R."/>
            <person name="Sims D.R."/>
            <person name="Han C."/>
            <person name="Kim E."/>
            <person name="Lykidis A."/>
            <person name="Lapidus A.L."/>
            <person name="McDonnald E."/>
            <person name="Rohlin L."/>
            <person name="Culley D.E."/>
            <person name="Gunsalus R."/>
            <person name="McInerney M.J."/>
        </authorList>
    </citation>
    <scope>NUCLEOTIDE SEQUENCE [LARGE SCALE GENOMIC DNA]</scope>
    <source>
        <strain>DSM 2245B / Goettingen</strain>
    </source>
</reference>
<gene>
    <name evidence="1" type="primary">nadE</name>
    <name type="ordered locus">Swol_1437</name>
</gene>
<feature type="chain" id="PRO_1000077634" description="NH(3)-dependent NAD(+) synthetase">
    <location>
        <begin position="1"/>
        <end position="249"/>
    </location>
</feature>
<feature type="binding site" evidence="1">
    <location>
        <begin position="29"/>
        <end position="36"/>
    </location>
    <ligand>
        <name>ATP</name>
        <dbReference type="ChEBI" id="CHEBI:30616"/>
    </ligand>
</feature>
<feature type="binding site" evidence="1">
    <location>
        <position position="35"/>
    </location>
    <ligand>
        <name>Mg(2+)</name>
        <dbReference type="ChEBI" id="CHEBI:18420"/>
    </ligand>
</feature>
<feature type="binding site" evidence="1">
    <location>
        <position position="116"/>
    </location>
    <ligand>
        <name>deamido-NAD(+)</name>
        <dbReference type="ChEBI" id="CHEBI:58437"/>
    </ligand>
</feature>
<feature type="binding site" evidence="1">
    <location>
        <position position="136"/>
    </location>
    <ligand>
        <name>ATP</name>
        <dbReference type="ChEBI" id="CHEBI:30616"/>
    </ligand>
</feature>
<feature type="binding site" evidence="1">
    <location>
        <position position="141"/>
    </location>
    <ligand>
        <name>Mg(2+)</name>
        <dbReference type="ChEBI" id="CHEBI:18420"/>
    </ligand>
</feature>
<feature type="binding site" evidence="1">
    <location>
        <position position="149"/>
    </location>
    <ligand>
        <name>deamido-NAD(+)</name>
        <dbReference type="ChEBI" id="CHEBI:58437"/>
    </ligand>
</feature>
<feature type="binding site" evidence="1">
    <location>
        <position position="156"/>
    </location>
    <ligand>
        <name>deamido-NAD(+)</name>
        <dbReference type="ChEBI" id="CHEBI:58437"/>
    </ligand>
</feature>
<feature type="binding site" evidence="1">
    <location>
        <position position="165"/>
    </location>
    <ligand>
        <name>ATP</name>
        <dbReference type="ChEBI" id="CHEBI:30616"/>
    </ligand>
</feature>
<feature type="binding site" evidence="1">
    <location>
        <position position="187"/>
    </location>
    <ligand>
        <name>ATP</name>
        <dbReference type="ChEBI" id="CHEBI:30616"/>
    </ligand>
</feature>
<feature type="binding site" evidence="1">
    <location>
        <begin position="233"/>
        <end position="234"/>
    </location>
    <ligand>
        <name>deamido-NAD(+)</name>
        <dbReference type="ChEBI" id="CHEBI:58437"/>
    </ligand>
</feature>
<comment type="function">
    <text evidence="1">Catalyzes the ATP-dependent amidation of deamido-NAD to form NAD. Uses ammonia as a nitrogen source.</text>
</comment>
<comment type="catalytic activity">
    <reaction evidence="1">
        <text>deamido-NAD(+) + NH4(+) + ATP = AMP + diphosphate + NAD(+) + H(+)</text>
        <dbReference type="Rhea" id="RHEA:21188"/>
        <dbReference type="ChEBI" id="CHEBI:15378"/>
        <dbReference type="ChEBI" id="CHEBI:28938"/>
        <dbReference type="ChEBI" id="CHEBI:30616"/>
        <dbReference type="ChEBI" id="CHEBI:33019"/>
        <dbReference type="ChEBI" id="CHEBI:57540"/>
        <dbReference type="ChEBI" id="CHEBI:58437"/>
        <dbReference type="ChEBI" id="CHEBI:456215"/>
        <dbReference type="EC" id="6.3.1.5"/>
    </reaction>
</comment>
<comment type="pathway">
    <text evidence="1">Cofactor biosynthesis; NAD(+) biosynthesis; NAD(+) from deamido-NAD(+) (ammonia route): step 1/1.</text>
</comment>
<comment type="subunit">
    <text evidence="1">Homodimer.</text>
</comment>
<comment type="similarity">
    <text evidence="1">Belongs to the NAD synthetase family.</text>
</comment>
<keyword id="KW-0067">ATP-binding</keyword>
<keyword id="KW-0436">Ligase</keyword>
<keyword id="KW-0460">Magnesium</keyword>
<keyword id="KW-0479">Metal-binding</keyword>
<keyword id="KW-0520">NAD</keyword>
<keyword id="KW-0547">Nucleotide-binding</keyword>
<keyword id="KW-1185">Reference proteome</keyword>
<organism>
    <name type="scientific">Syntrophomonas wolfei subsp. wolfei (strain DSM 2245B / Goettingen)</name>
    <dbReference type="NCBI Taxonomy" id="335541"/>
    <lineage>
        <taxon>Bacteria</taxon>
        <taxon>Bacillati</taxon>
        <taxon>Bacillota</taxon>
        <taxon>Clostridia</taxon>
        <taxon>Eubacteriales</taxon>
        <taxon>Syntrophomonadaceae</taxon>
        <taxon>Syntrophomonas</taxon>
    </lineage>
</organism>